<sequence>MSSGNQTFLIGKVSATHGVRGQLRITSFSGDMDSFMALRSVMIKKPGGGMETLAVAEAKAHGKKIILSLKGYTDINDVLHLVGREIYVLRDQLPLLSDGEYYWCDLLGLQVMTEDGDILGELVDIISTGSNDVYVVHGGGDKEILIPALDDVVLDVDTVAGRMTVSLPEGLLDL</sequence>
<keyword id="KW-0143">Chaperone</keyword>
<keyword id="KW-0963">Cytoplasm</keyword>
<keyword id="KW-1185">Reference proteome</keyword>
<keyword id="KW-0690">Ribosome biogenesis</keyword>
<keyword id="KW-0698">rRNA processing</keyword>
<gene>
    <name evidence="1" type="primary">rimM</name>
    <name type="ordered locus">Geob_1489</name>
</gene>
<organism>
    <name type="scientific">Geotalea daltonii (strain DSM 22248 / JCM 15807 / FRC-32)</name>
    <name type="common">Geobacter daltonii</name>
    <dbReference type="NCBI Taxonomy" id="316067"/>
    <lineage>
        <taxon>Bacteria</taxon>
        <taxon>Pseudomonadati</taxon>
        <taxon>Thermodesulfobacteriota</taxon>
        <taxon>Desulfuromonadia</taxon>
        <taxon>Geobacterales</taxon>
        <taxon>Geobacteraceae</taxon>
        <taxon>Geotalea</taxon>
    </lineage>
</organism>
<protein>
    <recommendedName>
        <fullName evidence="1">Ribosome maturation factor RimM</fullName>
    </recommendedName>
</protein>
<accession>B9M593</accession>
<reference key="1">
    <citation type="submission" date="2009-01" db="EMBL/GenBank/DDBJ databases">
        <title>Complete sequence of Geobacter sp. FRC-32.</title>
        <authorList>
            <consortium name="US DOE Joint Genome Institute"/>
            <person name="Lucas S."/>
            <person name="Copeland A."/>
            <person name="Lapidus A."/>
            <person name="Glavina del Rio T."/>
            <person name="Dalin E."/>
            <person name="Tice H."/>
            <person name="Bruce D."/>
            <person name="Goodwin L."/>
            <person name="Pitluck S."/>
            <person name="Saunders E."/>
            <person name="Brettin T."/>
            <person name="Detter J.C."/>
            <person name="Han C."/>
            <person name="Larimer F."/>
            <person name="Land M."/>
            <person name="Hauser L."/>
            <person name="Kyrpides N."/>
            <person name="Ovchinnikova G."/>
            <person name="Kostka J."/>
            <person name="Richardson P."/>
        </authorList>
    </citation>
    <scope>NUCLEOTIDE SEQUENCE [LARGE SCALE GENOMIC DNA]</scope>
    <source>
        <strain>DSM 22248 / JCM 15807 / FRC-32</strain>
    </source>
</reference>
<evidence type="ECO:0000255" key="1">
    <source>
        <dbReference type="HAMAP-Rule" id="MF_00014"/>
    </source>
</evidence>
<dbReference type="EMBL" id="CP001390">
    <property type="protein sequence ID" value="ACM19848.1"/>
    <property type="molecule type" value="Genomic_DNA"/>
</dbReference>
<dbReference type="RefSeq" id="WP_012646577.1">
    <property type="nucleotide sequence ID" value="NC_011979.1"/>
</dbReference>
<dbReference type="SMR" id="B9M593"/>
<dbReference type="STRING" id="316067.Geob_1489"/>
<dbReference type="KEGG" id="geo:Geob_1489"/>
<dbReference type="eggNOG" id="COG0806">
    <property type="taxonomic scope" value="Bacteria"/>
</dbReference>
<dbReference type="HOGENOM" id="CLU_077636_1_0_7"/>
<dbReference type="OrthoDB" id="9783509at2"/>
<dbReference type="Proteomes" id="UP000007721">
    <property type="component" value="Chromosome"/>
</dbReference>
<dbReference type="GO" id="GO:0005737">
    <property type="term" value="C:cytoplasm"/>
    <property type="evidence" value="ECO:0007669"/>
    <property type="project" value="UniProtKB-SubCell"/>
</dbReference>
<dbReference type="GO" id="GO:0005840">
    <property type="term" value="C:ribosome"/>
    <property type="evidence" value="ECO:0007669"/>
    <property type="project" value="InterPro"/>
</dbReference>
<dbReference type="GO" id="GO:0043022">
    <property type="term" value="F:ribosome binding"/>
    <property type="evidence" value="ECO:0007669"/>
    <property type="project" value="InterPro"/>
</dbReference>
<dbReference type="GO" id="GO:0042274">
    <property type="term" value="P:ribosomal small subunit biogenesis"/>
    <property type="evidence" value="ECO:0007669"/>
    <property type="project" value="UniProtKB-UniRule"/>
</dbReference>
<dbReference type="GO" id="GO:0006364">
    <property type="term" value="P:rRNA processing"/>
    <property type="evidence" value="ECO:0007669"/>
    <property type="project" value="UniProtKB-UniRule"/>
</dbReference>
<dbReference type="Gene3D" id="2.30.30.240">
    <property type="entry name" value="PRC-barrel domain"/>
    <property type="match status" value="1"/>
</dbReference>
<dbReference type="Gene3D" id="2.40.30.60">
    <property type="entry name" value="RimM"/>
    <property type="match status" value="1"/>
</dbReference>
<dbReference type="HAMAP" id="MF_00014">
    <property type="entry name" value="Ribosome_mat_RimM"/>
    <property type="match status" value="1"/>
</dbReference>
<dbReference type="InterPro" id="IPR011033">
    <property type="entry name" value="PRC_barrel-like_sf"/>
</dbReference>
<dbReference type="InterPro" id="IPR056792">
    <property type="entry name" value="PRC_RimM"/>
</dbReference>
<dbReference type="InterPro" id="IPR011961">
    <property type="entry name" value="RimM"/>
</dbReference>
<dbReference type="InterPro" id="IPR002676">
    <property type="entry name" value="RimM_N"/>
</dbReference>
<dbReference type="InterPro" id="IPR036976">
    <property type="entry name" value="RimM_N_sf"/>
</dbReference>
<dbReference type="InterPro" id="IPR009000">
    <property type="entry name" value="Transl_B-barrel_sf"/>
</dbReference>
<dbReference type="NCBIfam" id="TIGR02273">
    <property type="entry name" value="16S_RimM"/>
    <property type="match status" value="1"/>
</dbReference>
<dbReference type="PANTHER" id="PTHR33692">
    <property type="entry name" value="RIBOSOME MATURATION FACTOR RIMM"/>
    <property type="match status" value="1"/>
</dbReference>
<dbReference type="PANTHER" id="PTHR33692:SF1">
    <property type="entry name" value="RIBOSOME MATURATION FACTOR RIMM"/>
    <property type="match status" value="1"/>
</dbReference>
<dbReference type="Pfam" id="PF24986">
    <property type="entry name" value="PRC_RimM"/>
    <property type="match status" value="1"/>
</dbReference>
<dbReference type="Pfam" id="PF01782">
    <property type="entry name" value="RimM"/>
    <property type="match status" value="1"/>
</dbReference>
<dbReference type="SUPFAM" id="SSF50346">
    <property type="entry name" value="PRC-barrel domain"/>
    <property type="match status" value="1"/>
</dbReference>
<dbReference type="SUPFAM" id="SSF50447">
    <property type="entry name" value="Translation proteins"/>
    <property type="match status" value="1"/>
</dbReference>
<name>RIMM_GEODF</name>
<feature type="chain" id="PRO_1000116568" description="Ribosome maturation factor RimM">
    <location>
        <begin position="1"/>
        <end position="174"/>
    </location>
</feature>
<feature type="domain" description="PRC barrel" evidence="1">
    <location>
        <begin position="97"/>
        <end position="171"/>
    </location>
</feature>
<proteinExistence type="inferred from homology"/>
<comment type="function">
    <text evidence="1">An accessory protein needed during the final step in the assembly of 30S ribosomal subunit, possibly for assembly of the head region. Essential for efficient processing of 16S rRNA. May be needed both before and after RbfA during the maturation of 16S rRNA. It has affinity for free ribosomal 30S subunits but not for 70S ribosomes.</text>
</comment>
<comment type="subunit">
    <text evidence="1">Binds ribosomal protein uS19.</text>
</comment>
<comment type="subcellular location">
    <subcellularLocation>
        <location evidence="1">Cytoplasm</location>
    </subcellularLocation>
</comment>
<comment type="domain">
    <text evidence="1">The PRC barrel domain binds ribosomal protein uS19.</text>
</comment>
<comment type="similarity">
    <text evidence="1">Belongs to the RimM family.</text>
</comment>